<comment type="similarity">
    <text evidence="1">Belongs to the eukaryotic ribosomal protein eS24 family.</text>
</comment>
<protein>
    <recommendedName>
        <fullName evidence="1">Small ribosomal subunit protein eS24</fullName>
    </recommendedName>
    <alternativeName>
        <fullName evidence="2">30S ribosomal protein S24e</fullName>
    </alternativeName>
</protein>
<accession>P54032</accession>
<feature type="chain" id="PRO_0000137643" description="Small ribosomal subunit protein eS24">
    <location>
        <begin position="1"/>
        <end position="101"/>
    </location>
</feature>
<gene>
    <name evidence="1" type="primary">rps24e</name>
    <name type="ordered locus">MJ0394</name>
</gene>
<sequence length="101" mass="11842">MEIKILSERYNPLLKRKEYRFIVDHDGPTPTFKDVKLKLAAILNANKDLLIVEKIVEEAGMQRARGYAKLYDNEEMLKLVEREHILRKNKIEEETAAEEGE</sequence>
<proteinExistence type="inferred from homology"/>
<evidence type="ECO:0000255" key="1">
    <source>
        <dbReference type="HAMAP-Rule" id="MF_00545"/>
    </source>
</evidence>
<evidence type="ECO:0000305" key="2"/>
<dbReference type="EMBL" id="L77117">
    <property type="protein sequence ID" value="AAB98384.1"/>
    <property type="molecule type" value="Genomic_DNA"/>
</dbReference>
<dbReference type="PIR" id="B64349">
    <property type="entry name" value="B64349"/>
</dbReference>
<dbReference type="RefSeq" id="WP_010869893.1">
    <property type="nucleotide sequence ID" value="NC_000909.1"/>
</dbReference>
<dbReference type="SMR" id="P54032"/>
<dbReference type="FunCoup" id="P54032">
    <property type="interactions" value="60"/>
</dbReference>
<dbReference type="STRING" id="243232.MJ_0394"/>
<dbReference type="PaxDb" id="243232-MJ_0394"/>
<dbReference type="EnsemblBacteria" id="AAB98384">
    <property type="protein sequence ID" value="AAB98384"/>
    <property type="gene ID" value="MJ_0394"/>
</dbReference>
<dbReference type="GeneID" id="1451251"/>
<dbReference type="KEGG" id="mja:MJ_0394"/>
<dbReference type="eggNOG" id="arCOG04182">
    <property type="taxonomic scope" value="Archaea"/>
</dbReference>
<dbReference type="HOGENOM" id="CLU_107248_3_1_2"/>
<dbReference type="InParanoid" id="P54032"/>
<dbReference type="OrthoDB" id="27533at2157"/>
<dbReference type="PhylomeDB" id="P54032"/>
<dbReference type="Proteomes" id="UP000000805">
    <property type="component" value="Chromosome"/>
</dbReference>
<dbReference type="GO" id="GO:1990904">
    <property type="term" value="C:ribonucleoprotein complex"/>
    <property type="evidence" value="ECO:0007669"/>
    <property type="project" value="UniProtKB-KW"/>
</dbReference>
<dbReference type="GO" id="GO:0005840">
    <property type="term" value="C:ribosome"/>
    <property type="evidence" value="ECO:0007669"/>
    <property type="project" value="UniProtKB-KW"/>
</dbReference>
<dbReference type="GO" id="GO:0003735">
    <property type="term" value="F:structural constituent of ribosome"/>
    <property type="evidence" value="ECO:0007669"/>
    <property type="project" value="InterPro"/>
</dbReference>
<dbReference type="GO" id="GO:0006412">
    <property type="term" value="P:translation"/>
    <property type="evidence" value="ECO:0007669"/>
    <property type="project" value="UniProtKB-UniRule"/>
</dbReference>
<dbReference type="Gene3D" id="3.30.70.330">
    <property type="match status" value="1"/>
</dbReference>
<dbReference type="HAMAP" id="MF_00545">
    <property type="entry name" value="Ribosomal_eS24"/>
    <property type="match status" value="1"/>
</dbReference>
<dbReference type="InterPro" id="IPR012677">
    <property type="entry name" value="Nucleotide-bd_a/b_plait_sf"/>
</dbReference>
<dbReference type="InterPro" id="IPR001976">
    <property type="entry name" value="Ribosomal_eS24"/>
</dbReference>
<dbReference type="InterPro" id="IPR018098">
    <property type="entry name" value="Ribosomal_eS24_CS"/>
</dbReference>
<dbReference type="InterPro" id="IPR012678">
    <property type="entry name" value="Ribosomal_uL23/eL15/eS24_sf"/>
</dbReference>
<dbReference type="Pfam" id="PF01282">
    <property type="entry name" value="Ribosomal_S24e"/>
    <property type="match status" value="1"/>
</dbReference>
<dbReference type="SUPFAM" id="SSF54189">
    <property type="entry name" value="Ribosomal proteins S24e, L23 and L15e"/>
    <property type="match status" value="1"/>
</dbReference>
<dbReference type="PROSITE" id="PS00529">
    <property type="entry name" value="RIBOSOMAL_S24E"/>
    <property type="match status" value="1"/>
</dbReference>
<name>RS24_METJA</name>
<organism>
    <name type="scientific">Methanocaldococcus jannaschii (strain ATCC 43067 / DSM 2661 / JAL-1 / JCM 10045 / NBRC 100440)</name>
    <name type="common">Methanococcus jannaschii</name>
    <dbReference type="NCBI Taxonomy" id="243232"/>
    <lineage>
        <taxon>Archaea</taxon>
        <taxon>Methanobacteriati</taxon>
        <taxon>Methanobacteriota</taxon>
        <taxon>Methanomada group</taxon>
        <taxon>Methanococci</taxon>
        <taxon>Methanococcales</taxon>
        <taxon>Methanocaldococcaceae</taxon>
        <taxon>Methanocaldococcus</taxon>
    </lineage>
</organism>
<reference key="1">
    <citation type="journal article" date="1996" name="Science">
        <title>Complete genome sequence of the methanogenic archaeon, Methanococcus jannaschii.</title>
        <authorList>
            <person name="Bult C.J."/>
            <person name="White O."/>
            <person name="Olsen G.J."/>
            <person name="Zhou L."/>
            <person name="Fleischmann R.D."/>
            <person name="Sutton G.G."/>
            <person name="Blake J.A."/>
            <person name="FitzGerald L.M."/>
            <person name="Clayton R.A."/>
            <person name="Gocayne J.D."/>
            <person name="Kerlavage A.R."/>
            <person name="Dougherty B.A."/>
            <person name="Tomb J.-F."/>
            <person name="Adams M.D."/>
            <person name="Reich C.I."/>
            <person name="Overbeek R."/>
            <person name="Kirkness E.F."/>
            <person name="Weinstock K.G."/>
            <person name="Merrick J.M."/>
            <person name="Glodek A."/>
            <person name="Scott J.L."/>
            <person name="Geoghagen N.S.M."/>
            <person name="Weidman J.F."/>
            <person name="Fuhrmann J.L."/>
            <person name="Nguyen D."/>
            <person name="Utterback T.R."/>
            <person name="Kelley J.M."/>
            <person name="Peterson J.D."/>
            <person name="Sadow P.W."/>
            <person name="Hanna M.C."/>
            <person name="Cotton M.D."/>
            <person name="Roberts K.M."/>
            <person name="Hurst M.A."/>
            <person name="Kaine B.P."/>
            <person name="Borodovsky M."/>
            <person name="Klenk H.-P."/>
            <person name="Fraser C.M."/>
            <person name="Smith H.O."/>
            <person name="Woese C.R."/>
            <person name="Venter J.C."/>
        </authorList>
    </citation>
    <scope>NUCLEOTIDE SEQUENCE [LARGE SCALE GENOMIC DNA]</scope>
    <source>
        <strain>ATCC 43067 / DSM 2661 / JAL-1 / JCM 10045 / NBRC 100440</strain>
    </source>
</reference>
<keyword id="KW-1185">Reference proteome</keyword>
<keyword id="KW-0687">Ribonucleoprotein</keyword>
<keyword id="KW-0689">Ribosomal protein</keyword>